<protein>
    <recommendedName>
        <fullName>Na(+)/H(+) antiporter subunit D1</fullName>
    </recommendedName>
    <alternativeName>
        <fullName>Mnh complex subunit D1</fullName>
    </alternativeName>
</protein>
<name>MNHD1_STAAC</name>
<evidence type="ECO:0000250" key="1"/>
<evidence type="ECO:0000255" key="2"/>
<evidence type="ECO:0000305" key="3"/>
<dbReference type="EMBL" id="CP000046">
    <property type="protein sequence ID" value="AAW37920.1"/>
    <property type="molecule type" value="Genomic_DNA"/>
</dbReference>
<dbReference type="RefSeq" id="WP_000573071.1">
    <property type="nucleotide sequence ID" value="NC_002951.2"/>
</dbReference>
<dbReference type="SMR" id="Q5HHD6"/>
<dbReference type="KEGG" id="sac:SACOL0952"/>
<dbReference type="HOGENOM" id="CLU_007100_9_2_9"/>
<dbReference type="Proteomes" id="UP000000530">
    <property type="component" value="Chromosome"/>
</dbReference>
<dbReference type="GO" id="GO:0005886">
    <property type="term" value="C:plasma membrane"/>
    <property type="evidence" value="ECO:0007669"/>
    <property type="project" value="UniProtKB-SubCell"/>
</dbReference>
<dbReference type="GO" id="GO:0008137">
    <property type="term" value="F:NADH dehydrogenase (ubiquinone) activity"/>
    <property type="evidence" value="ECO:0007669"/>
    <property type="project" value="InterPro"/>
</dbReference>
<dbReference type="GO" id="GO:0015386">
    <property type="term" value="F:potassium:proton antiporter activity"/>
    <property type="evidence" value="ECO:0007669"/>
    <property type="project" value="InterPro"/>
</dbReference>
<dbReference type="GO" id="GO:0042773">
    <property type="term" value="P:ATP synthesis coupled electron transport"/>
    <property type="evidence" value="ECO:0007669"/>
    <property type="project" value="InterPro"/>
</dbReference>
<dbReference type="GO" id="GO:0006814">
    <property type="term" value="P:sodium ion transport"/>
    <property type="evidence" value="ECO:0007669"/>
    <property type="project" value="UniProtKB-KW"/>
</dbReference>
<dbReference type="InterPro" id="IPR050586">
    <property type="entry name" value="CPA3_Na-H_Antiporter_D"/>
</dbReference>
<dbReference type="InterPro" id="IPR004775">
    <property type="entry name" value="MnhD1"/>
</dbReference>
<dbReference type="InterPro" id="IPR003918">
    <property type="entry name" value="NADH_UbQ_OxRdtase"/>
</dbReference>
<dbReference type="InterPro" id="IPR001750">
    <property type="entry name" value="ND/Mrp_TM"/>
</dbReference>
<dbReference type="NCBIfam" id="TIGR00944">
    <property type="entry name" value="2a6301s04"/>
    <property type="match status" value="1"/>
</dbReference>
<dbReference type="NCBIfam" id="NF005818">
    <property type="entry name" value="PRK07691.1"/>
    <property type="match status" value="1"/>
</dbReference>
<dbReference type="PANTHER" id="PTHR42703:SF1">
    <property type="entry name" value="NA(+)_H(+) ANTIPORTER SUBUNIT D1"/>
    <property type="match status" value="1"/>
</dbReference>
<dbReference type="PANTHER" id="PTHR42703">
    <property type="entry name" value="NADH DEHYDROGENASE"/>
    <property type="match status" value="1"/>
</dbReference>
<dbReference type="Pfam" id="PF00361">
    <property type="entry name" value="Proton_antipo_M"/>
    <property type="match status" value="1"/>
</dbReference>
<dbReference type="PRINTS" id="PR01437">
    <property type="entry name" value="NUOXDRDTASE4"/>
</dbReference>
<comment type="function">
    <text evidence="1">Mnh complex is a Na(+)/H(+) antiporter involved in Na(+) excretion.</text>
</comment>
<comment type="subunit">
    <text evidence="1">May form a heterooligomeric complex that consists of seven subunits: mnhA1, mnhB1, mnhC1, mnhD1, mnhE1, mnhF1 and mnhG1.</text>
</comment>
<comment type="subcellular location">
    <subcellularLocation>
        <location evidence="3">Cell membrane</location>
        <topology evidence="3">Multi-pass membrane protein</topology>
    </subcellularLocation>
</comment>
<comment type="similarity">
    <text evidence="3">Belongs to the CPA3 antiporters (TC 2.A.63) subunit D family.</text>
</comment>
<keyword id="KW-0050">Antiport</keyword>
<keyword id="KW-1003">Cell membrane</keyword>
<keyword id="KW-0375">Hydrogen ion transport</keyword>
<keyword id="KW-0406">Ion transport</keyword>
<keyword id="KW-0472">Membrane</keyword>
<keyword id="KW-0915">Sodium</keyword>
<keyword id="KW-0739">Sodium transport</keyword>
<keyword id="KW-0812">Transmembrane</keyword>
<keyword id="KW-1133">Transmembrane helix</keyword>
<keyword id="KW-0813">Transport</keyword>
<organism>
    <name type="scientific">Staphylococcus aureus (strain COL)</name>
    <dbReference type="NCBI Taxonomy" id="93062"/>
    <lineage>
        <taxon>Bacteria</taxon>
        <taxon>Bacillati</taxon>
        <taxon>Bacillota</taxon>
        <taxon>Bacilli</taxon>
        <taxon>Bacillales</taxon>
        <taxon>Staphylococcaceae</taxon>
        <taxon>Staphylococcus</taxon>
    </lineage>
</organism>
<proteinExistence type="inferred from homology"/>
<sequence length="498" mass="54680">MIESNMLVLTLVIPVITAILLVFIGKRPIIKRYVALGGTLLTLVAAIINLANVVKHGPIRVELGSWKAPYSIVFVLDIFSALLIITSIIITAIVILYSSQTIGIERERYYYYFSVLFMLIGIIGAFTTGDIFNLFVFFEVFLMSSYFLLVIGSTKIQLQETIKYVLVNVVSSSFFVMGVAILYSVVGTLNLADISNKLANLSAHDSGLVNIVFILFIFVFATKAGVFPMFVWLPSAYYAPPIPIIAFFGALLTKVGVYAIARTLSLFFSDNVSFSHYVILFLALLTIIFGCVGAVAYANIKKIILYNVMIAVGVILVGVAMMTESGMIGAIYYTLHDMLVKLALFLLIGIMIKITGTADLRQFGGLIKRYPVLGWSFFIAALSLAGIPPLSGFYGKFFIVQSTFERGFYLSGVIVLLSSLVVLYSVIRIFLQGFFGQPKGYDLNNKVDVKYLTTIAIVAVVITVLYGLSADYLYPMVKAGAETFYNPSTYVKAVLGGK</sequence>
<gene>
    <name type="primary">mnhD1</name>
    <name type="ordered locus">SACOL0952</name>
</gene>
<feature type="chain" id="PRO_0000217076" description="Na(+)/H(+) antiporter subunit D1">
    <location>
        <begin position="1"/>
        <end position="498"/>
    </location>
</feature>
<feature type="transmembrane region" description="Helical" evidence="2">
    <location>
        <begin position="6"/>
        <end position="25"/>
    </location>
</feature>
<feature type="transmembrane region" description="Helical" evidence="2">
    <location>
        <begin position="32"/>
        <end position="54"/>
    </location>
</feature>
<feature type="transmembrane region" description="Helical" evidence="2">
    <location>
        <begin position="74"/>
        <end position="96"/>
    </location>
</feature>
<feature type="transmembrane region" description="Helical" evidence="2">
    <location>
        <begin position="109"/>
        <end position="126"/>
    </location>
</feature>
<feature type="transmembrane region" description="Helical" evidence="2">
    <location>
        <begin position="131"/>
        <end position="153"/>
    </location>
</feature>
<feature type="transmembrane region" description="Helical" evidence="2">
    <location>
        <begin position="165"/>
        <end position="187"/>
    </location>
</feature>
<feature type="transmembrane region" description="Helical" evidence="2">
    <location>
        <begin position="211"/>
        <end position="233"/>
    </location>
</feature>
<feature type="transmembrane region" description="Helical" evidence="2">
    <location>
        <begin position="238"/>
        <end position="260"/>
    </location>
</feature>
<feature type="transmembrane region" description="Helical" evidence="2">
    <location>
        <begin position="275"/>
        <end position="297"/>
    </location>
</feature>
<feature type="transmembrane region" description="Helical" evidence="2">
    <location>
        <begin position="304"/>
        <end position="323"/>
    </location>
</feature>
<feature type="transmembrane region" description="Helical" evidence="2">
    <location>
        <begin position="328"/>
        <end position="350"/>
    </location>
</feature>
<feature type="transmembrane region" description="Helical" evidence="2">
    <location>
        <begin position="371"/>
        <end position="393"/>
    </location>
</feature>
<feature type="transmembrane region" description="Helical" evidence="2">
    <location>
        <begin position="408"/>
        <end position="430"/>
    </location>
</feature>
<feature type="transmembrane region" description="Helical" evidence="2">
    <location>
        <begin position="451"/>
        <end position="470"/>
    </location>
</feature>
<accession>Q5HHD6</accession>
<reference key="1">
    <citation type="journal article" date="2005" name="J. Bacteriol.">
        <title>Insights on evolution of virulence and resistance from the complete genome analysis of an early methicillin-resistant Staphylococcus aureus strain and a biofilm-producing methicillin-resistant Staphylococcus epidermidis strain.</title>
        <authorList>
            <person name="Gill S.R."/>
            <person name="Fouts D.E."/>
            <person name="Archer G.L."/>
            <person name="Mongodin E.F."/>
            <person name="DeBoy R.T."/>
            <person name="Ravel J."/>
            <person name="Paulsen I.T."/>
            <person name="Kolonay J.F."/>
            <person name="Brinkac L.M."/>
            <person name="Beanan M.J."/>
            <person name="Dodson R.J."/>
            <person name="Daugherty S.C."/>
            <person name="Madupu R."/>
            <person name="Angiuoli S.V."/>
            <person name="Durkin A.S."/>
            <person name="Haft D.H."/>
            <person name="Vamathevan J.J."/>
            <person name="Khouri H."/>
            <person name="Utterback T.R."/>
            <person name="Lee C."/>
            <person name="Dimitrov G."/>
            <person name="Jiang L."/>
            <person name="Qin H."/>
            <person name="Weidman J."/>
            <person name="Tran K."/>
            <person name="Kang K.H."/>
            <person name="Hance I.R."/>
            <person name="Nelson K.E."/>
            <person name="Fraser C.M."/>
        </authorList>
    </citation>
    <scope>NUCLEOTIDE SEQUENCE [LARGE SCALE GENOMIC DNA]</scope>
    <source>
        <strain>COL</strain>
    </source>
</reference>